<keyword id="KW-0963">Cytoplasm</keyword>
<keyword id="KW-0342">GTP-binding</keyword>
<keyword id="KW-0396">Initiation factor</keyword>
<keyword id="KW-0547">Nucleotide-binding</keyword>
<keyword id="KW-0648">Protein biosynthesis</keyword>
<name>IF2_LEPBA</name>
<proteinExistence type="inferred from homology"/>
<accession>B0SH18</accession>
<sequence length="917" mass="97208">MEEQKSIKETLQQGASGDKTKKKLVIKKKAAPSDEKKESSPGAQGQTTATEAKQSSPASSDKKKDLNELIREEAKRQGLGSGPQAPSQASPIVSRPDRKPEPLPQPDREKAPMDRKPESILSGDTSSPNFRSGGGQGGGNQGYFRKEDRNPIVSRPTTPRPPRPEGQTGGGYQGNRGPGQGGGYQGNRGPGQGGPGGYQGNRGPGQGGPGGYQGNRGPGQGGPGGYQGNRGPGQGGPGGYQGNRGPGQGGPGGYQGNRGARPIGQGGPGSGRPPGDAPFGAPGGLPGAGGPGGAKKRVFDKEKGGREENENTKFFKQSFRKQKAQAAALAAVPKEISILENIQVGEIAKKLNLKPGEVISKLMKMGMMVTINNVIDAETASILADDYGCKVKIVSLYDETVIEEEKDAPEDYITRPPVVTIMGHVDHGKTKLLDTIRSSRVAEGESGGITQHIGAYQVETERGKIAFLDTPGHEAFTSMRARGASVTDIVVLVVAADDGVMPQTIEAINHAKEAEVPIIVAVNKIDLPAANPEKVRQELSNYGLQPEEWGGTTIFCDISAKSNIGIDKLLEMLIIQAELLDHKANPKRKAKGTIVEAKLDPGRGAVATVLIQNGTLRVGDAFVAGVHAGRVRAMYDDLGRSIKEAGPSFPALVTGLDGVPDAGAPFDVVIDDKEARTISHSRQEYERLGQSKNAATRVTLDNMSEIIKQGALKELKVIIKADVRGSTEAVKEALEKLSTADVRLNVIHAGTGAIVDSDIILASASNAIVIGFHTRANPKTVSLAEKEKVEIKYYSIIYDVVNEVKASMEGMLEPEKVENIIGKVEIRDVFKISKVGNIAGCMVKSGKVTKQAHVRVISSETGEITWEGKIKNLKRMKDDVADVLTGFECGILLDGFNDFSVGDEIEAYEIREIARKL</sequence>
<evidence type="ECO:0000250" key="1"/>
<evidence type="ECO:0000255" key="2">
    <source>
        <dbReference type="HAMAP-Rule" id="MF_00100"/>
    </source>
</evidence>
<evidence type="ECO:0000256" key="3">
    <source>
        <dbReference type="SAM" id="MobiDB-lite"/>
    </source>
</evidence>
<reference key="1">
    <citation type="journal article" date="2008" name="PLoS ONE">
        <title>Genome sequence of the saprophyte Leptospira biflexa provides insights into the evolution of Leptospira and the pathogenesis of leptospirosis.</title>
        <authorList>
            <person name="Picardeau M."/>
            <person name="Bulach D.M."/>
            <person name="Bouchier C."/>
            <person name="Zuerner R.L."/>
            <person name="Zidane N."/>
            <person name="Wilson P.J."/>
            <person name="Creno S."/>
            <person name="Kuczek E.S."/>
            <person name="Bommezzadri S."/>
            <person name="Davis J.C."/>
            <person name="McGrath A."/>
            <person name="Johnson M.J."/>
            <person name="Boursaux-Eude C."/>
            <person name="Seemann T."/>
            <person name="Rouy Z."/>
            <person name="Coppel R.L."/>
            <person name="Rood J.I."/>
            <person name="Lajus A."/>
            <person name="Davies J.K."/>
            <person name="Medigue C."/>
            <person name="Adler B."/>
        </authorList>
    </citation>
    <scope>NUCLEOTIDE SEQUENCE [LARGE SCALE GENOMIC DNA]</scope>
    <source>
        <strain>Patoc 1 / Ames</strain>
    </source>
</reference>
<comment type="function">
    <text evidence="2">One of the essential components for the initiation of protein synthesis. Protects formylmethionyl-tRNA from spontaneous hydrolysis and promotes its binding to the 30S ribosomal subunits. Also involved in the hydrolysis of GTP during the formation of the 70S ribosomal complex.</text>
</comment>
<comment type="subcellular location">
    <subcellularLocation>
        <location evidence="2">Cytoplasm</location>
    </subcellularLocation>
</comment>
<comment type="similarity">
    <text evidence="2">Belongs to the TRAFAC class translation factor GTPase superfamily. Classic translation factor GTPase family. IF-2 subfamily.</text>
</comment>
<gene>
    <name evidence="2" type="primary">infB</name>
    <name type="ordered locus">LBF_1472</name>
</gene>
<dbReference type="EMBL" id="CP000777">
    <property type="protein sequence ID" value="ABZ93985.1"/>
    <property type="molecule type" value="Genomic_DNA"/>
</dbReference>
<dbReference type="RefSeq" id="WP_012388511.1">
    <property type="nucleotide sequence ID" value="NC_010842.1"/>
</dbReference>
<dbReference type="SMR" id="B0SH18"/>
<dbReference type="KEGG" id="lbf:LBF_1472"/>
<dbReference type="HOGENOM" id="CLU_006301_5_1_12"/>
<dbReference type="GO" id="GO:0005829">
    <property type="term" value="C:cytosol"/>
    <property type="evidence" value="ECO:0007669"/>
    <property type="project" value="TreeGrafter"/>
</dbReference>
<dbReference type="GO" id="GO:0005525">
    <property type="term" value="F:GTP binding"/>
    <property type="evidence" value="ECO:0007669"/>
    <property type="project" value="UniProtKB-KW"/>
</dbReference>
<dbReference type="GO" id="GO:0003924">
    <property type="term" value="F:GTPase activity"/>
    <property type="evidence" value="ECO:0007669"/>
    <property type="project" value="UniProtKB-UniRule"/>
</dbReference>
<dbReference type="GO" id="GO:0003743">
    <property type="term" value="F:translation initiation factor activity"/>
    <property type="evidence" value="ECO:0007669"/>
    <property type="project" value="UniProtKB-UniRule"/>
</dbReference>
<dbReference type="CDD" id="cd01887">
    <property type="entry name" value="IF2_eIF5B"/>
    <property type="match status" value="1"/>
</dbReference>
<dbReference type="CDD" id="cd03702">
    <property type="entry name" value="IF2_mtIF2_II"/>
    <property type="match status" value="1"/>
</dbReference>
<dbReference type="CDD" id="cd03692">
    <property type="entry name" value="mtIF2_IVc"/>
    <property type="match status" value="1"/>
</dbReference>
<dbReference type="FunFam" id="2.40.30.10:FF:000008">
    <property type="entry name" value="Translation initiation factor IF-2"/>
    <property type="match status" value="1"/>
</dbReference>
<dbReference type="FunFam" id="2.40.30.10:FF:000054">
    <property type="entry name" value="Translation initiation factor IF-2"/>
    <property type="match status" value="1"/>
</dbReference>
<dbReference type="FunFam" id="3.40.50.10050:FF:000001">
    <property type="entry name" value="Translation initiation factor IF-2"/>
    <property type="match status" value="1"/>
</dbReference>
<dbReference type="FunFam" id="3.40.50.300:FF:000019">
    <property type="entry name" value="Translation initiation factor IF-2"/>
    <property type="match status" value="1"/>
</dbReference>
<dbReference type="Gene3D" id="3.40.50.300">
    <property type="entry name" value="P-loop containing nucleotide triphosphate hydrolases"/>
    <property type="match status" value="1"/>
</dbReference>
<dbReference type="Gene3D" id="2.40.30.10">
    <property type="entry name" value="Translation factors"/>
    <property type="match status" value="2"/>
</dbReference>
<dbReference type="Gene3D" id="3.40.50.10050">
    <property type="entry name" value="Translation initiation factor IF- 2, domain 3"/>
    <property type="match status" value="1"/>
</dbReference>
<dbReference type="HAMAP" id="MF_00100_B">
    <property type="entry name" value="IF_2_B"/>
    <property type="match status" value="1"/>
</dbReference>
<dbReference type="InterPro" id="IPR053905">
    <property type="entry name" value="EF-G-like_DII"/>
</dbReference>
<dbReference type="InterPro" id="IPR044145">
    <property type="entry name" value="IF2_II"/>
</dbReference>
<dbReference type="InterPro" id="IPR006847">
    <property type="entry name" value="IF2_N"/>
</dbReference>
<dbReference type="InterPro" id="IPR027417">
    <property type="entry name" value="P-loop_NTPase"/>
</dbReference>
<dbReference type="InterPro" id="IPR005225">
    <property type="entry name" value="Small_GTP-bd"/>
</dbReference>
<dbReference type="InterPro" id="IPR000795">
    <property type="entry name" value="T_Tr_GTP-bd_dom"/>
</dbReference>
<dbReference type="InterPro" id="IPR000178">
    <property type="entry name" value="TF_IF2_bacterial-like"/>
</dbReference>
<dbReference type="InterPro" id="IPR015760">
    <property type="entry name" value="TIF_IF2"/>
</dbReference>
<dbReference type="InterPro" id="IPR023115">
    <property type="entry name" value="TIF_IF2_dom3"/>
</dbReference>
<dbReference type="InterPro" id="IPR036925">
    <property type="entry name" value="TIF_IF2_dom3_sf"/>
</dbReference>
<dbReference type="InterPro" id="IPR009000">
    <property type="entry name" value="Transl_B-barrel_sf"/>
</dbReference>
<dbReference type="NCBIfam" id="TIGR00487">
    <property type="entry name" value="IF-2"/>
    <property type="match status" value="1"/>
</dbReference>
<dbReference type="NCBIfam" id="TIGR00231">
    <property type="entry name" value="small_GTP"/>
    <property type="match status" value="1"/>
</dbReference>
<dbReference type="PANTHER" id="PTHR43381:SF5">
    <property type="entry name" value="TR-TYPE G DOMAIN-CONTAINING PROTEIN"/>
    <property type="match status" value="1"/>
</dbReference>
<dbReference type="PANTHER" id="PTHR43381">
    <property type="entry name" value="TRANSLATION INITIATION FACTOR IF-2-RELATED"/>
    <property type="match status" value="1"/>
</dbReference>
<dbReference type="Pfam" id="PF22042">
    <property type="entry name" value="EF-G_D2"/>
    <property type="match status" value="1"/>
</dbReference>
<dbReference type="Pfam" id="PF00009">
    <property type="entry name" value="GTP_EFTU"/>
    <property type="match status" value="1"/>
</dbReference>
<dbReference type="Pfam" id="PF11987">
    <property type="entry name" value="IF-2"/>
    <property type="match status" value="1"/>
</dbReference>
<dbReference type="Pfam" id="PF04760">
    <property type="entry name" value="IF2_N"/>
    <property type="match status" value="1"/>
</dbReference>
<dbReference type="PRINTS" id="PR00449">
    <property type="entry name" value="RASTRNSFRMNG"/>
</dbReference>
<dbReference type="SUPFAM" id="SSF52156">
    <property type="entry name" value="Initiation factor IF2/eIF5b, domain 3"/>
    <property type="match status" value="1"/>
</dbReference>
<dbReference type="SUPFAM" id="SSF52540">
    <property type="entry name" value="P-loop containing nucleoside triphosphate hydrolases"/>
    <property type="match status" value="1"/>
</dbReference>
<dbReference type="SUPFAM" id="SSF50447">
    <property type="entry name" value="Translation proteins"/>
    <property type="match status" value="2"/>
</dbReference>
<dbReference type="PROSITE" id="PS51722">
    <property type="entry name" value="G_TR_2"/>
    <property type="match status" value="1"/>
</dbReference>
<dbReference type="PROSITE" id="PS01176">
    <property type="entry name" value="IF2"/>
    <property type="match status" value="1"/>
</dbReference>
<feature type="chain" id="PRO_0000335484" description="Translation initiation factor IF-2">
    <location>
        <begin position="1"/>
        <end position="917"/>
    </location>
</feature>
<feature type="domain" description="tr-type G">
    <location>
        <begin position="414"/>
        <end position="587"/>
    </location>
</feature>
<feature type="region of interest" description="Disordered" evidence="3">
    <location>
        <begin position="1"/>
        <end position="312"/>
    </location>
</feature>
<feature type="region of interest" description="G1" evidence="1">
    <location>
        <begin position="423"/>
        <end position="430"/>
    </location>
</feature>
<feature type="region of interest" description="G2" evidence="1">
    <location>
        <begin position="448"/>
        <end position="452"/>
    </location>
</feature>
<feature type="region of interest" description="G3" evidence="1">
    <location>
        <begin position="469"/>
        <end position="472"/>
    </location>
</feature>
<feature type="region of interest" description="G4" evidence="1">
    <location>
        <begin position="523"/>
        <end position="526"/>
    </location>
</feature>
<feature type="region of interest" description="G5" evidence="1">
    <location>
        <begin position="559"/>
        <end position="561"/>
    </location>
</feature>
<feature type="compositionally biased region" description="Basic residues" evidence="3">
    <location>
        <begin position="20"/>
        <end position="30"/>
    </location>
</feature>
<feature type="compositionally biased region" description="Polar residues" evidence="3">
    <location>
        <begin position="41"/>
        <end position="59"/>
    </location>
</feature>
<feature type="compositionally biased region" description="Basic and acidic residues" evidence="3">
    <location>
        <begin position="60"/>
        <end position="76"/>
    </location>
</feature>
<feature type="compositionally biased region" description="Basic and acidic residues" evidence="3">
    <location>
        <begin position="95"/>
        <end position="118"/>
    </location>
</feature>
<feature type="compositionally biased region" description="Gly residues" evidence="3">
    <location>
        <begin position="132"/>
        <end position="141"/>
    </location>
</feature>
<feature type="compositionally biased region" description="Gly residues" evidence="3">
    <location>
        <begin position="167"/>
        <end position="256"/>
    </location>
</feature>
<feature type="compositionally biased region" description="Gly residues" evidence="3">
    <location>
        <begin position="281"/>
        <end position="293"/>
    </location>
</feature>
<feature type="compositionally biased region" description="Basic and acidic residues" evidence="3">
    <location>
        <begin position="297"/>
        <end position="312"/>
    </location>
</feature>
<feature type="binding site" evidence="2">
    <location>
        <begin position="423"/>
        <end position="430"/>
    </location>
    <ligand>
        <name>GTP</name>
        <dbReference type="ChEBI" id="CHEBI:37565"/>
    </ligand>
</feature>
<feature type="binding site" evidence="2">
    <location>
        <begin position="469"/>
        <end position="473"/>
    </location>
    <ligand>
        <name>GTP</name>
        <dbReference type="ChEBI" id="CHEBI:37565"/>
    </ligand>
</feature>
<feature type="binding site" evidence="2">
    <location>
        <begin position="523"/>
        <end position="526"/>
    </location>
    <ligand>
        <name>GTP</name>
        <dbReference type="ChEBI" id="CHEBI:37565"/>
    </ligand>
</feature>
<protein>
    <recommendedName>
        <fullName evidence="2">Translation initiation factor IF-2</fullName>
    </recommendedName>
</protein>
<organism>
    <name type="scientific">Leptospira biflexa serovar Patoc (strain Patoc 1 / Ames)</name>
    <dbReference type="NCBI Taxonomy" id="355278"/>
    <lineage>
        <taxon>Bacteria</taxon>
        <taxon>Pseudomonadati</taxon>
        <taxon>Spirochaetota</taxon>
        <taxon>Spirochaetia</taxon>
        <taxon>Leptospirales</taxon>
        <taxon>Leptospiraceae</taxon>
        <taxon>Leptospira</taxon>
    </lineage>
</organism>